<evidence type="ECO:0000250" key="1"/>
<evidence type="ECO:0000255" key="2"/>
<evidence type="ECO:0000255" key="3">
    <source>
        <dbReference type="PROSITE-ProRule" id="PRU00521"/>
    </source>
</evidence>
<evidence type="ECO:0000303" key="4">
    <source>
    </source>
</evidence>
<evidence type="ECO:0000305" key="5"/>
<evidence type="ECO:0000305" key="6">
    <source>
    </source>
</evidence>
<evidence type="ECO:0000305" key="7">
    <source>
    </source>
</evidence>
<evidence type="ECO:0000305" key="8">
    <source>
    </source>
</evidence>
<evidence type="ECO:0007829" key="9">
    <source>
        <dbReference type="PDB" id="8T1V"/>
    </source>
</evidence>
<evidence type="ECO:0007829" key="10">
    <source>
        <dbReference type="PDB" id="8T1W"/>
    </source>
</evidence>
<evidence type="ECO:0007829" key="11">
    <source>
        <dbReference type="PDB" id="8TF5"/>
    </source>
</evidence>
<protein>
    <recommendedName>
        <fullName>G-protein coupled receptor 6</fullName>
    </recommendedName>
    <alternativeName>
        <fullName>Sphingosine 1-phosphate receptor GPR6</fullName>
    </alternativeName>
</protein>
<proteinExistence type="evidence at protein level"/>
<gene>
    <name type="primary">GPR6</name>
</gene>
<comment type="function">
    <text evidence="1">Orphan receptor with constitutive G(s) signaling activity that activate cyclic AMP. Promotes neurite outgrowth and blocks myelin inhibition in neurons (By similarity).</text>
</comment>
<comment type="subcellular location">
    <subcellularLocation>
        <location evidence="7">Cell membrane</location>
        <topology evidence="7">Multi-pass membrane protein</topology>
    </subcellularLocation>
    <text>Detected in the intracellular compartments. It is currently unclear whether this is a cell surface or intracellular receptor.</text>
</comment>
<comment type="alternative products">
    <event type="alternative splicing"/>
    <isoform>
        <id>P46095-1</id>
        <name>1</name>
        <sequence type="displayed"/>
    </isoform>
    <isoform>
        <id>P46095-2</id>
        <name>2</name>
        <sequence type="described" ref="VSP_055105"/>
    </isoform>
</comment>
<comment type="similarity">
    <text evidence="3">Belongs to the G-protein coupled receptor 1 family.</text>
</comment>
<comment type="caution">
    <text evidence="6 8">Was originally (PubMed:12220620) thought to be a receptor for sphingosine 1-phosphate. It has been demonstrated that it is not the case (PubMed:19286662).</text>
</comment>
<accession>P46095</accession>
<accession>B4DHS9</accession>
<accession>J3KQR3</accession>
<accession>Q17RJ7</accession>
<accession>Q5SYL0</accession>
<dbReference type="EMBL" id="L36150">
    <property type="protein sequence ID" value="AAA63181.1"/>
    <property type="molecule type" value="Genomic_DNA"/>
</dbReference>
<dbReference type="EMBL" id="U18549">
    <property type="protein sequence ID" value="AAA91631.1"/>
    <property type="molecule type" value="Genomic_DNA"/>
</dbReference>
<dbReference type="EMBL" id="AK295250">
    <property type="protein sequence ID" value="BAG58241.1"/>
    <property type="molecule type" value="mRNA"/>
</dbReference>
<dbReference type="EMBL" id="AL591076">
    <property type="status" value="NOT_ANNOTATED_CDS"/>
    <property type="molecule type" value="Genomic_DNA"/>
</dbReference>
<dbReference type="EMBL" id="BC043414">
    <property type="protein sequence ID" value="AAH43414.1"/>
    <property type="molecule type" value="mRNA"/>
</dbReference>
<dbReference type="EMBL" id="BC117298">
    <property type="protein sequence ID" value="AAI17299.1"/>
    <property type="molecule type" value="mRNA"/>
</dbReference>
<dbReference type="EMBL" id="BC126301">
    <property type="protein sequence ID" value="AAI26302.1"/>
    <property type="molecule type" value="mRNA"/>
</dbReference>
<dbReference type="CCDS" id="CCDS5079.1">
    <molecule id="P46095-1"/>
</dbReference>
<dbReference type="CCDS" id="CCDS69172.1">
    <molecule id="P46095-2"/>
</dbReference>
<dbReference type="PIR" id="I65990">
    <property type="entry name" value="I65990"/>
</dbReference>
<dbReference type="RefSeq" id="NP_001273028.1">
    <molecule id="P46095-2"/>
    <property type="nucleotide sequence ID" value="NM_001286099.2"/>
</dbReference>
<dbReference type="RefSeq" id="NP_005275.1">
    <molecule id="P46095-1"/>
    <property type="nucleotide sequence ID" value="NM_005284.5"/>
</dbReference>
<dbReference type="PDB" id="8T1V">
    <property type="method" value="X-ray"/>
    <property type="resolution" value="2.60 A"/>
    <property type="chains" value="A=48-256, A=270-362"/>
</dbReference>
<dbReference type="PDB" id="8T1W">
    <property type="method" value="X-ray"/>
    <property type="resolution" value="3.49 A"/>
    <property type="chains" value="A=48-256, A=270-362"/>
</dbReference>
<dbReference type="PDB" id="8TF5">
    <property type="method" value="X-ray"/>
    <property type="resolution" value="2.10 A"/>
    <property type="chains" value="A=48-256, A=270-362"/>
</dbReference>
<dbReference type="PDB" id="8TYW">
    <property type="method" value="EM"/>
    <property type="resolution" value="3.43 A"/>
    <property type="chains" value="A=1-362"/>
</dbReference>
<dbReference type="PDBsum" id="8T1V"/>
<dbReference type="PDBsum" id="8T1W"/>
<dbReference type="PDBsum" id="8TF5"/>
<dbReference type="PDBsum" id="8TYW"/>
<dbReference type="EMDB" id="EMD-41729"/>
<dbReference type="SMR" id="P46095"/>
<dbReference type="BioGRID" id="109091">
    <property type="interactions" value="10"/>
</dbReference>
<dbReference type="FunCoup" id="P46095">
    <property type="interactions" value="296"/>
</dbReference>
<dbReference type="IntAct" id="P46095">
    <property type="interactions" value="2"/>
</dbReference>
<dbReference type="STRING" id="9606.ENSP00000406986"/>
<dbReference type="BindingDB" id="P46095"/>
<dbReference type="ChEMBL" id="CHEMBL3714130"/>
<dbReference type="GuidetoPHARMACOLOGY" id="85"/>
<dbReference type="GlyCosmos" id="P46095">
    <property type="glycosylation" value="3 sites, No reported glycans"/>
</dbReference>
<dbReference type="GlyGen" id="P46095">
    <property type="glycosylation" value="3 sites"/>
</dbReference>
<dbReference type="PhosphoSitePlus" id="P46095"/>
<dbReference type="BioMuta" id="GPR6"/>
<dbReference type="DMDM" id="1170009"/>
<dbReference type="PaxDb" id="9606-ENSP00000406986"/>
<dbReference type="PeptideAtlas" id="P46095"/>
<dbReference type="Antibodypedia" id="19237">
    <property type="antibodies" value="108 antibodies from 27 providers"/>
</dbReference>
<dbReference type="DNASU" id="2830"/>
<dbReference type="Ensembl" id="ENST00000275169.5">
    <molecule id="P46095-1"/>
    <property type="protein sequence ID" value="ENSP00000275169.3"/>
    <property type="gene ID" value="ENSG00000146360.9"/>
</dbReference>
<dbReference type="Ensembl" id="ENST00000414000.3">
    <molecule id="P46095-2"/>
    <property type="protein sequence ID" value="ENSP00000406986.2"/>
    <property type="gene ID" value="ENSG00000146360.9"/>
</dbReference>
<dbReference type="GeneID" id="2830"/>
<dbReference type="KEGG" id="hsa:2830"/>
<dbReference type="MANE-Select" id="ENST00000275169.5">
    <property type="protein sequence ID" value="ENSP00000275169.3"/>
    <property type="RefSeq nucleotide sequence ID" value="NM_005284.5"/>
    <property type="RefSeq protein sequence ID" value="NP_005275.1"/>
</dbReference>
<dbReference type="UCSC" id="uc011eav.4">
    <molecule id="P46095-1"/>
    <property type="organism name" value="human"/>
</dbReference>
<dbReference type="AGR" id="HGNC:4515"/>
<dbReference type="CTD" id="2830"/>
<dbReference type="DisGeNET" id="2830"/>
<dbReference type="GeneCards" id="GPR6"/>
<dbReference type="HGNC" id="HGNC:4515">
    <property type="gene designation" value="GPR6"/>
</dbReference>
<dbReference type="HPA" id="ENSG00000146360">
    <property type="expression patterns" value="Tissue enriched (brain)"/>
</dbReference>
<dbReference type="MIM" id="600553">
    <property type="type" value="gene"/>
</dbReference>
<dbReference type="neXtProt" id="NX_P46095"/>
<dbReference type="OpenTargets" id="ENSG00000146360"/>
<dbReference type="PharmGKB" id="PA28904"/>
<dbReference type="VEuPathDB" id="HostDB:ENSG00000146360"/>
<dbReference type="eggNOG" id="KOG3656">
    <property type="taxonomic scope" value="Eukaryota"/>
</dbReference>
<dbReference type="GeneTree" id="ENSGT01110000267224"/>
<dbReference type="HOGENOM" id="CLU_065071_0_0_1"/>
<dbReference type="InParanoid" id="P46095"/>
<dbReference type="OMA" id="YCVVGDP"/>
<dbReference type="OrthoDB" id="10042731at2759"/>
<dbReference type="PAN-GO" id="P46095">
    <property type="GO annotations" value="5 GO annotations based on evolutionary models"/>
</dbReference>
<dbReference type="PhylomeDB" id="P46095"/>
<dbReference type="TreeFam" id="TF330052"/>
<dbReference type="PathwayCommons" id="P46095"/>
<dbReference type="SignaLink" id="P46095"/>
<dbReference type="BioGRID-ORCS" id="2830">
    <property type="hits" value="14 hits in 1142 CRISPR screens"/>
</dbReference>
<dbReference type="GeneWiki" id="GPR6"/>
<dbReference type="GenomeRNAi" id="2830"/>
<dbReference type="Pharos" id="P46095">
    <property type="development level" value="Tchem"/>
</dbReference>
<dbReference type="PRO" id="PR:P46095"/>
<dbReference type="Proteomes" id="UP000005640">
    <property type="component" value="Chromosome 6"/>
</dbReference>
<dbReference type="RNAct" id="P46095">
    <property type="molecule type" value="protein"/>
</dbReference>
<dbReference type="Bgee" id="ENSG00000146360">
    <property type="expression patterns" value="Expressed in nucleus accumbens and 35 other cell types or tissues"/>
</dbReference>
<dbReference type="ExpressionAtlas" id="P46095">
    <property type="expression patterns" value="baseline and differential"/>
</dbReference>
<dbReference type="GO" id="GO:0005737">
    <property type="term" value="C:cytoplasm"/>
    <property type="evidence" value="ECO:0000318"/>
    <property type="project" value="GO_Central"/>
</dbReference>
<dbReference type="GO" id="GO:0005886">
    <property type="term" value="C:plasma membrane"/>
    <property type="evidence" value="ECO:0000318"/>
    <property type="project" value="GO_Central"/>
</dbReference>
<dbReference type="GO" id="GO:0004930">
    <property type="term" value="F:G protein-coupled receptor activity"/>
    <property type="evidence" value="ECO:0000304"/>
    <property type="project" value="ProtInc"/>
</dbReference>
<dbReference type="GO" id="GO:0038036">
    <property type="term" value="F:sphingosine-1-phosphate receptor activity"/>
    <property type="evidence" value="ECO:0000318"/>
    <property type="project" value="GO_Central"/>
</dbReference>
<dbReference type="GO" id="GO:0007189">
    <property type="term" value="P:adenylate cyclase-activating G protein-coupled receptor signaling pathway"/>
    <property type="evidence" value="ECO:0000318"/>
    <property type="project" value="GO_Central"/>
</dbReference>
<dbReference type="GO" id="GO:0007186">
    <property type="term" value="P:G protein-coupled receptor signaling pathway"/>
    <property type="evidence" value="ECO:0000304"/>
    <property type="project" value="ProtInc"/>
</dbReference>
<dbReference type="GO" id="GO:0007204">
    <property type="term" value="P:positive regulation of cytosolic calcium ion concentration"/>
    <property type="evidence" value="ECO:0007669"/>
    <property type="project" value="Ensembl"/>
</dbReference>
<dbReference type="GO" id="GO:0019222">
    <property type="term" value="P:regulation of metabolic process"/>
    <property type="evidence" value="ECO:0000318"/>
    <property type="project" value="GO_Central"/>
</dbReference>
<dbReference type="CDD" id="cd15962">
    <property type="entry name" value="7tmA_GPR6"/>
    <property type="match status" value="1"/>
</dbReference>
<dbReference type="FunFam" id="1.20.1070.10:FF:000067">
    <property type="entry name" value="G-protein coupled receptor 12"/>
    <property type="match status" value="1"/>
</dbReference>
<dbReference type="Gene3D" id="1.20.1070.10">
    <property type="entry name" value="Rhodopsin 7-helix transmembrane proteins"/>
    <property type="match status" value="1"/>
</dbReference>
<dbReference type="InterPro" id="IPR000276">
    <property type="entry name" value="GPCR_Rhodpsn"/>
</dbReference>
<dbReference type="InterPro" id="IPR017452">
    <property type="entry name" value="GPCR_Rhodpsn_7TM"/>
</dbReference>
<dbReference type="InterPro" id="IPR001151">
    <property type="entry name" value="GPR6"/>
</dbReference>
<dbReference type="InterPro" id="IPR000723">
    <property type="entry name" value="GPR_3/6/12_orphan"/>
</dbReference>
<dbReference type="PANTHER" id="PTHR22750">
    <property type="entry name" value="G-PROTEIN COUPLED RECEPTOR"/>
    <property type="match status" value="1"/>
</dbReference>
<dbReference type="Pfam" id="PF00001">
    <property type="entry name" value="7tm_1"/>
    <property type="match status" value="1"/>
</dbReference>
<dbReference type="PRINTS" id="PR00237">
    <property type="entry name" value="GPCRRHODOPSN"/>
</dbReference>
<dbReference type="PRINTS" id="PR00649">
    <property type="entry name" value="GPR6ORPHANR"/>
</dbReference>
<dbReference type="PRINTS" id="PR00644">
    <property type="entry name" value="GPRORPHANR"/>
</dbReference>
<dbReference type="SUPFAM" id="SSF81321">
    <property type="entry name" value="Family A G protein-coupled receptor-like"/>
    <property type="match status" value="1"/>
</dbReference>
<dbReference type="PROSITE" id="PS00237">
    <property type="entry name" value="G_PROTEIN_RECEP_F1_1"/>
    <property type="match status" value="1"/>
</dbReference>
<dbReference type="PROSITE" id="PS50262">
    <property type="entry name" value="G_PROTEIN_RECEP_F1_2"/>
    <property type="match status" value="1"/>
</dbReference>
<name>GPR6_HUMAN</name>
<sequence>MNASAASLNDSQVVVVAAEGAAAAATAAGGPDTGEWGPPAAAALGAGGGANGSLELSSQLSAGPPGLLLPAVNPWDVLLCVSGTVIAGENALVVALIASTPALRTPMFVLVGSLATADLLAGCGLILHFVFQYLVPSETVSLLTVGFLVASFAASVSSLLAITVDRYLSLYNALTYYSRRTLLGVHLLLAATWTVSLGLGLLPVLGWNCLAERAACSVVRPLARSHVALLSAAFFMVFGIMLHLYVRICQVVWRHAHQIALQQHCLAPPHLAATRKGVGTLAVVLGTFGASWLPFAIYCVVGSHEDPAVYTYATLLPATYNSMINPIIYAFRNQEIQRALWLLLCGCFQSKVPFRSRSPSEV</sequence>
<keyword id="KW-0002">3D-structure</keyword>
<keyword id="KW-0025">Alternative splicing</keyword>
<keyword id="KW-1003">Cell membrane</keyword>
<keyword id="KW-0297">G-protein coupled receptor</keyword>
<keyword id="KW-0325">Glycoprotein</keyword>
<keyword id="KW-0449">Lipoprotein</keyword>
<keyword id="KW-0472">Membrane</keyword>
<keyword id="KW-0564">Palmitate</keyword>
<keyword id="KW-0597">Phosphoprotein</keyword>
<keyword id="KW-0675">Receptor</keyword>
<keyword id="KW-1185">Reference proteome</keyword>
<keyword id="KW-0807">Transducer</keyword>
<keyword id="KW-0812">Transmembrane</keyword>
<keyword id="KW-1133">Transmembrane helix</keyword>
<feature type="chain" id="PRO_0000069514" description="G-protein coupled receptor 6">
    <location>
        <begin position="1"/>
        <end position="362"/>
    </location>
</feature>
<feature type="topological domain" description="Extracellular" evidence="2">
    <location>
        <begin position="1"/>
        <end position="74"/>
    </location>
</feature>
<feature type="transmembrane region" description="Helical; Name=1" evidence="2">
    <location>
        <begin position="75"/>
        <end position="94"/>
    </location>
</feature>
<feature type="topological domain" description="Cytoplasmic" evidence="2">
    <location>
        <begin position="95"/>
        <end position="106"/>
    </location>
</feature>
<feature type="transmembrane region" description="Helical; Name=2" evidence="2">
    <location>
        <begin position="107"/>
        <end position="130"/>
    </location>
</feature>
<feature type="topological domain" description="Extracellular" evidence="2">
    <location>
        <begin position="131"/>
        <end position="142"/>
    </location>
</feature>
<feature type="transmembrane region" description="Helical; Name=3" evidence="2">
    <location>
        <begin position="143"/>
        <end position="164"/>
    </location>
</feature>
<feature type="topological domain" description="Cytoplasmic" evidence="2">
    <location>
        <begin position="165"/>
        <end position="185"/>
    </location>
</feature>
<feature type="transmembrane region" description="Helical; Name=4" evidence="2">
    <location>
        <begin position="186"/>
        <end position="205"/>
    </location>
</feature>
<feature type="topological domain" description="Extracellular" evidence="2">
    <location>
        <begin position="206"/>
        <end position="230"/>
    </location>
</feature>
<feature type="transmembrane region" description="Helical; Name=5" evidence="2">
    <location>
        <begin position="231"/>
        <end position="249"/>
    </location>
</feature>
<feature type="topological domain" description="Cytoplasmic" evidence="2">
    <location>
        <begin position="250"/>
        <end position="277"/>
    </location>
</feature>
<feature type="transmembrane region" description="Helical; Name=6" evidence="2">
    <location>
        <begin position="278"/>
        <end position="304"/>
    </location>
</feature>
<feature type="topological domain" description="Extracellular" evidence="2">
    <location>
        <begin position="305"/>
        <end position="309"/>
    </location>
</feature>
<feature type="transmembrane region" description="Helical; Name=7" evidence="2">
    <location>
        <begin position="310"/>
        <end position="331"/>
    </location>
</feature>
<feature type="topological domain" description="Cytoplasmic" evidence="2">
    <location>
        <begin position="332"/>
        <end position="362"/>
    </location>
</feature>
<feature type="modified residue" description="Phosphoserine" evidence="2">
    <location>
        <position position="356"/>
    </location>
</feature>
<feature type="modified residue" description="Phosphoserine" evidence="2">
    <location>
        <position position="358"/>
    </location>
</feature>
<feature type="modified residue" description="Phosphoserine" evidence="2">
    <location>
        <position position="360"/>
    </location>
</feature>
<feature type="lipid moiety-binding region" description="S-palmitoyl cysteine" evidence="1">
    <location>
        <position position="345"/>
    </location>
</feature>
<feature type="glycosylation site" description="N-linked (GlcNAc...) asparagine" evidence="2">
    <location>
        <position position="2"/>
    </location>
</feature>
<feature type="glycosylation site" description="N-linked (GlcNAc...) asparagine" evidence="2">
    <location>
        <position position="9"/>
    </location>
</feature>
<feature type="glycosylation site" description="N-linked (GlcNAc...) asparagine" evidence="2">
    <location>
        <position position="51"/>
    </location>
</feature>
<feature type="splice variant" id="VSP_055105" description="In isoform 2." evidence="4">
    <original>M</original>
    <variation>MTLLAWCTRGANPAAM</variation>
    <location>
        <position position="1"/>
    </location>
</feature>
<feature type="sequence conflict" description="In Ref. 3; BAG58241." evidence="5" ref="3">
    <original>Y</original>
    <variation>H</variation>
    <location>
        <position position="310"/>
    </location>
</feature>
<feature type="sequence conflict" description="In Ref. 3; BAG58241." evidence="5" ref="3">
    <original>S</original>
    <variation>P</variation>
    <location>
        <position position="358"/>
    </location>
</feature>
<feature type="helix" evidence="11">
    <location>
        <begin position="74"/>
        <end position="98"/>
    </location>
</feature>
<feature type="helix" evidence="9">
    <location>
        <begin position="101"/>
        <end position="103"/>
    </location>
</feature>
<feature type="helix" evidence="11">
    <location>
        <begin position="106"/>
        <end position="133"/>
    </location>
</feature>
<feature type="helix" evidence="11">
    <location>
        <begin position="138"/>
        <end position="171"/>
    </location>
</feature>
<feature type="turn" evidence="11">
    <location>
        <begin position="173"/>
        <end position="176"/>
    </location>
</feature>
<feature type="helix" evidence="11">
    <location>
        <begin position="179"/>
        <end position="205"/>
    </location>
</feature>
<feature type="strand" evidence="11">
    <location>
        <begin position="208"/>
        <end position="211"/>
    </location>
</feature>
<feature type="helix" evidence="11">
    <location>
        <begin position="213"/>
        <end position="215"/>
    </location>
</feature>
<feature type="helix" evidence="11">
    <location>
        <begin position="224"/>
        <end position="256"/>
    </location>
</feature>
<feature type="helix" evidence="11">
    <location>
        <begin position="270"/>
        <end position="301"/>
    </location>
</feature>
<feature type="strand" evidence="10">
    <location>
        <begin position="304"/>
        <end position="306"/>
    </location>
</feature>
<feature type="helix" evidence="11">
    <location>
        <begin position="309"/>
        <end position="329"/>
    </location>
</feature>
<feature type="turn" evidence="11">
    <location>
        <begin position="330"/>
        <end position="332"/>
    </location>
</feature>
<feature type="helix" evidence="11">
    <location>
        <begin position="334"/>
        <end position="344"/>
    </location>
</feature>
<organism>
    <name type="scientific">Homo sapiens</name>
    <name type="common">Human</name>
    <dbReference type="NCBI Taxonomy" id="9606"/>
    <lineage>
        <taxon>Eukaryota</taxon>
        <taxon>Metazoa</taxon>
        <taxon>Chordata</taxon>
        <taxon>Craniata</taxon>
        <taxon>Vertebrata</taxon>
        <taxon>Euteleostomi</taxon>
        <taxon>Mammalia</taxon>
        <taxon>Eutheria</taxon>
        <taxon>Euarchontoglires</taxon>
        <taxon>Primates</taxon>
        <taxon>Haplorrhini</taxon>
        <taxon>Catarrhini</taxon>
        <taxon>Hominidae</taxon>
        <taxon>Homo</taxon>
    </lineage>
</organism>
<reference key="1">
    <citation type="journal article" date="1995" name="DNA Cell Biol.">
        <title>Isolation of three novel human genes encoding G protein-coupled receptors.</title>
        <authorList>
            <person name="Heiber M."/>
            <person name="Docherty J.M."/>
            <person name="Shah G."/>
            <person name="Nguyen T."/>
            <person name="Cheng R."/>
            <person name="Heng H.H.Q."/>
            <person name="Marchese A."/>
            <person name="Tsui L.-C."/>
            <person name="Shi X."/>
            <person name="George S.R."/>
            <person name="O'Dowd B.F."/>
        </authorList>
    </citation>
    <scope>NUCLEOTIDE SEQUENCE [GENOMIC DNA] (ISOFORM 1)</scope>
</reference>
<reference key="2">
    <citation type="journal article" date="1995" name="Genomics">
        <title>Molecular cloning and chromosomal localization of human genes encoding three closely related G protein-coupled receptors.</title>
        <authorList>
            <person name="Song Z.-H."/>
            <person name="Modi W."/>
            <person name="Bonner T.I."/>
        </authorList>
    </citation>
    <scope>NUCLEOTIDE SEQUENCE [GENOMIC DNA] (ISOFORM 1)</scope>
</reference>
<reference key="3">
    <citation type="journal article" date="2004" name="Nat. Genet.">
        <title>Complete sequencing and characterization of 21,243 full-length human cDNAs.</title>
        <authorList>
            <person name="Ota T."/>
            <person name="Suzuki Y."/>
            <person name="Nishikawa T."/>
            <person name="Otsuki T."/>
            <person name="Sugiyama T."/>
            <person name="Irie R."/>
            <person name="Wakamatsu A."/>
            <person name="Hayashi K."/>
            <person name="Sato H."/>
            <person name="Nagai K."/>
            <person name="Kimura K."/>
            <person name="Makita H."/>
            <person name="Sekine M."/>
            <person name="Obayashi M."/>
            <person name="Nishi T."/>
            <person name="Shibahara T."/>
            <person name="Tanaka T."/>
            <person name="Ishii S."/>
            <person name="Yamamoto J."/>
            <person name="Saito K."/>
            <person name="Kawai Y."/>
            <person name="Isono Y."/>
            <person name="Nakamura Y."/>
            <person name="Nagahari K."/>
            <person name="Murakami K."/>
            <person name="Yasuda T."/>
            <person name="Iwayanagi T."/>
            <person name="Wagatsuma M."/>
            <person name="Shiratori A."/>
            <person name="Sudo H."/>
            <person name="Hosoiri T."/>
            <person name="Kaku Y."/>
            <person name="Kodaira H."/>
            <person name="Kondo H."/>
            <person name="Sugawara M."/>
            <person name="Takahashi M."/>
            <person name="Kanda K."/>
            <person name="Yokoi T."/>
            <person name="Furuya T."/>
            <person name="Kikkawa E."/>
            <person name="Omura Y."/>
            <person name="Abe K."/>
            <person name="Kamihara K."/>
            <person name="Katsuta N."/>
            <person name="Sato K."/>
            <person name="Tanikawa M."/>
            <person name="Yamazaki M."/>
            <person name="Ninomiya K."/>
            <person name="Ishibashi T."/>
            <person name="Yamashita H."/>
            <person name="Murakawa K."/>
            <person name="Fujimori K."/>
            <person name="Tanai H."/>
            <person name="Kimata M."/>
            <person name="Watanabe M."/>
            <person name="Hiraoka S."/>
            <person name="Chiba Y."/>
            <person name="Ishida S."/>
            <person name="Ono Y."/>
            <person name="Takiguchi S."/>
            <person name="Watanabe S."/>
            <person name="Yosida M."/>
            <person name="Hotuta T."/>
            <person name="Kusano J."/>
            <person name="Kanehori K."/>
            <person name="Takahashi-Fujii A."/>
            <person name="Hara H."/>
            <person name="Tanase T.-O."/>
            <person name="Nomura Y."/>
            <person name="Togiya S."/>
            <person name="Komai F."/>
            <person name="Hara R."/>
            <person name="Takeuchi K."/>
            <person name="Arita M."/>
            <person name="Imose N."/>
            <person name="Musashino K."/>
            <person name="Yuuki H."/>
            <person name="Oshima A."/>
            <person name="Sasaki N."/>
            <person name="Aotsuka S."/>
            <person name="Yoshikawa Y."/>
            <person name="Matsunawa H."/>
            <person name="Ichihara T."/>
            <person name="Shiohata N."/>
            <person name="Sano S."/>
            <person name="Moriya S."/>
            <person name="Momiyama H."/>
            <person name="Satoh N."/>
            <person name="Takami S."/>
            <person name="Terashima Y."/>
            <person name="Suzuki O."/>
            <person name="Nakagawa S."/>
            <person name="Senoh A."/>
            <person name="Mizoguchi H."/>
            <person name="Goto Y."/>
            <person name="Shimizu F."/>
            <person name="Wakebe H."/>
            <person name="Hishigaki H."/>
            <person name="Watanabe T."/>
            <person name="Sugiyama A."/>
            <person name="Takemoto M."/>
            <person name="Kawakami B."/>
            <person name="Yamazaki M."/>
            <person name="Watanabe K."/>
            <person name="Kumagai A."/>
            <person name="Itakura S."/>
            <person name="Fukuzumi Y."/>
            <person name="Fujimori Y."/>
            <person name="Komiyama M."/>
            <person name="Tashiro H."/>
            <person name="Tanigami A."/>
            <person name="Fujiwara T."/>
            <person name="Ono T."/>
            <person name="Yamada K."/>
            <person name="Fujii Y."/>
            <person name="Ozaki K."/>
            <person name="Hirao M."/>
            <person name="Ohmori Y."/>
            <person name="Kawabata A."/>
            <person name="Hikiji T."/>
            <person name="Kobatake N."/>
            <person name="Inagaki H."/>
            <person name="Ikema Y."/>
            <person name="Okamoto S."/>
            <person name="Okitani R."/>
            <person name="Kawakami T."/>
            <person name="Noguchi S."/>
            <person name="Itoh T."/>
            <person name="Shigeta K."/>
            <person name="Senba T."/>
            <person name="Matsumura K."/>
            <person name="Nakajima Y."/>
            <person name="Mizuno T."/>
            <person name="Morinaga M."/>
            <person name="Sasaki M."/>
            <person name="Togashi T."/>
            <person name="Oyama M."/>
            <person name="Hata H."/>
            <person name="Watanabe M."/>
            <person name="Komatsu T."/>
            <person name="Mizushima-Sugano J."/>
            <person name="Satoh T."/>
            <person name="Shirai Y."/>
            <person name="Takahashi Y."/>
            <person name="Nakagawa K."/>
            <person name="Okumura K."/>
            <person name="Nagase T."/>
            <person name="Nomura N."/>
            <person name="Kikuchi H."/>
            <person name="Masuho Y."/>
            <person name="Yamashita R."/>
            <person name="Nakai K."/>
            <person name="Yada T."/>
            <person name="Nakamura Y."/>
            <person name="Ohara O."/>
            <person name="Isogai T."/>
            <person name="Sugano S."/>
        </authorList>
    </citation>
    <scope>NUCLEOTIDE SEQUENCE [LARGE SCALE MRNA] (ISOFORM 2)</scope>
</reference>
<reference key="4">
    <citation type="journal article" date="2003" name="Nature">
        <title>The DNA sequence and analysis of human chromosome 6.</title>
        <authorList>
            <person name="Mungall A.J."/>
            <person name="Palmer S.A."/>
            <person name="Sims S.K."/>
            <person name="Edwards C.A."/>
            <person name="Ashurst J.L."/>
            <person name="Wilming L."/>
            <person name="Jones M.C."/>
            <person name="Horton R."/>
            <person name="Hunt S.E."/>
            <person name="Scott C.E."/>
            <person name="Gilbert J.G.R."/>
            <person name="Clamp M.E."/>
            <person name="Bethel G."/>
            <person name="Milne S."/>
            <person name="Ainscough R."/>
            <person name="Almeida J.P."/>
            <person name="Ambrose K.D."/>
            <person name="Andrews T.D."/>
            <person name="Ashwell R.I.S."/>
            <person name="Babbage A.K."/>
            <person name="Bagguley C.L."/>
            <person name="Bailey J."/>
            <person name="Banerjee R."/>
            <person name="Barker D.J."/>
            <person name="Barlow K.F."/>
            <person name="Bates K."/>
            <person name="Beare D.M."/>
            <person name="Beasley H."/>
            <person name="Beasley O."/>
            <person name="Bird C.P."/>
            <person name="Blakey S.E."/>
            <person name="Bray-Allen S."/>
            <person name="Brook J."/>
            <person name="Brown A.J."/>
            <person name="Brown J.Y."/>
            <person name="Burford D.C."/>
            <person name="Burrill W."/>
            <person name="Burton J."/>
            <person name="Carder C."/>
            <person name="Carter N.P."/>
            <person name="Chapman J.C."/>
            <person name="Clark S.Y."/>
            <person name="Clark G."/>
            <person name="Clee C.M."/>
            <person name="Clegg S."/>
            <person name="Cobley V."/>
            <person name="Collier R.E."/>
            <person name="Collins J.E."/>
            <person name="Colman L.K."/>
            <person name="Corby N.R."/>
            <person name="Coville G.J."/>
            <person name="Culley K.M."/>
            <person name="Dhami P."/>
            <person name="Davies J."/>
            <person name="Dunn M."/>
            <person name="Earthrowl M.E."/>
            <person name="Ellington A.E."/>
            <person name="Evans K.A."/>
            <person name="Faulkner L."/>
            <person name="Francis M.D."/>
            <person name="Frankish A."/>
            <person name="Frankland J."/>
            <person name="French L."/>
            <person name="Garner P."/>
            <person name="Garnett J."/>
            <person name="Ghori M.J."/>
            <person name="Gilby L.M."/>
            <person name="Gillson C.J."/>
            <person name="Glithero R.J."/>
            <person name="Grafham D.V."/>
            <person name="Grant M."/>
            <person name="Gribble S."/>
            <person name="Griffiths C."/>
            <person name="Griffiths M.N.D."/>
            <person name="Hall R."/>
            <person name="Halls K.S."/>
            <person name="Hammond S."/>
            <person name="Harley J.L."/>
            <person name="Hart E.A."/>
            <person name="Heath P.D."/>
            <person name="Heathcott R."/>
            <person name="Holmes S.J."/>
            <person name="Howden P.J."/>
            <person name="Howe K.L."/>
            <person name="Howell G.R."/>
            <person name="Huckle E."/>
            <person name="Humphray S.J."/>
            <person name="Humphries M.D."/>
            <person name="Hunt A.R."/>
            <person name="Johnson C.M."/>
            <person name="Joy A.A."/>
            <person name="Kay M."/>
            <person name="Keenan S.J."/>
            <person name="Kimberley A.M."/>
            <person name="King A."/>
            <person name="Laird G.K."/>
            <person name="Langford C."/>
            <person name="Lawlor S."/>
            <person name="Leongamornlert D.A."/>
            <person name="Leversha M."/>
            <person name="Lloyd C.R."/>
            <person name="Lloyd D.M."/>
            <person name="Loveland J.E."/>
            <person name="Lovell J."/>
            <person name="Martin S."/>
            <person name="Mashreghi-Mohammadi M."/>
            <person name="Maslen G.L."/>
            <person name="Matthews L."/>
            <person name="McCann O.T."/>
            <person name="McLaren S.J."/>
            <person name="McLay K."/>
            <person name="McMurray A."/>
            <person name="Moore M.J.F."/>
            <person name="Mullikin J.C."/>
            <person name="Niblett D."/>
            <person name="Nickerson T."/>
            <person name="Novik K.L."/>
            <person name="Oliver K."/>
            <person name="Overton-Larty E.K."/>
            <person name="Parker A."/>
            <person name="Patel R."/>
            <person name="Pearce A.V."/>
            <person name="Peck A.I."/>
            <person name="Phillimore B.J.C.T."/>
            <person name="Phillips S."/>
            <person name="Plumb R.W."/>
            <person name="Porter K.M."/>
            <person name="Ramsey Y."/>
            <person name="Ranby S.A."/>
            <person name="Rice C.M."/>
            <person name="Ross M.T."/>
            <person name="Searle S.M."/>
            <person name="Sehra H.K."/>
            <person name="Sheridan E."/>
            <person name="Skuce C.D."/>
            <person name="Smith S."/>
            <person name="Smith M."/>
            <person name="Spraggon L."/>
            <person name="Squares S.L."/>
            <person name="Steward C.A."/>
            <person name="Sycamore N."/>
            <person name="Tamlyn-Hall G."/>
            <person name="Tester J."/>
            <person name="Theaker A.J."/>
            <person name="Thomas D.W."/>
            <person name="Thorpe A."/>
            <person name="Tracey A."/>
            <person name="Tromans A."/>
            <person name="Tubby B."/>
            <person name="Wall M."/>
            <person name="Wallis J.M."/>
            <person name="West A.P."/>
            <person name="White S.S."/>
            <person name="Whitehead S.L."/>
            <person name="Whittaker H."/>
            <person name="Wild A."/>
            <person name="Willey D.J."/>
            <person name="Wilmer T.E."/>
            <person name="Wood J.M."/>
            <person name="Wray P.W."/>
            <person name="Wyatt J.C."/>
            <person name="Young L."/>
            <person name="Younger R.M."/>
            <person name="Bentley D.R."/>
            <person name="Coulson A."/>
            <person name="Durbin R.M."/>
            <person name="Hubbard T."/>
            <person name="Sulston J.E."/>
            <person name="Dunham I."/>
            <person name="Rogers J."/>
            <person name="Beck S."/>
        </authorList>
    </citation>
    <scope>NUCLEOTIDE SEQUENCE [LARGE SCALE GENOMIC DNA]</scope>
</reference>
<reference key="5">
    <citation type="journal article" date="2004" name="Genome Res.">
        <title>The status, quality, and expansion of the NIH full-length cDNA project: the Mammalian Gene Collection (MGC).</title>
        <authorList>
            <consortium name="The MGC Project Team"/>
        </authorList>
    </citation>
    <scope>NUCLEOTIDE SEQUENCE [LARGE SCALE MRNA] (ISOFORM 1)</scope>
    <source>
        <tissue>Brain</tissue>
    </source>
</reference>
<reference key="6">
    <citation type="journal article" date="2002" name="Cell. Signal.">
        <title>Sphingosine 1-phosphate is a ligand of the human gpr3, gpr6 and gpr12 family of constitutively active G protein-coupled receptors.</title>
        <authorList>
            <person name="Uhlenbrock K."/>
            <person name="Gassenhuber J."/>
            <person name="Kostenis E."/>
        </authorList>
    </citation>
    <scope>PRELIMINARY FUNCTION</scope>
</reference>
<reference key="7">
    <citation type="journal article" date="2009" name="FEBS Lett.">
        <title>Constitutively active GPR6 is located in the intracellular compartments.</title>
        <authorList>
            <person name="Padmanabhan S."/>
            <person name="Myers A.G."/>
            <person name="Prasad B.M."/>
        </authorList>
    </citation>
    <scope>SUBCELLULAR LOCATION</scope>
</reference>
<reference key="8">
    <citation type="journal article" date="2009" name="J. Biol. Chem.">
        <title>Lipid G protein-coupled receptor ligand identification using beta-arrestin PathHunter assay.</title>
        <authorList>
            <person name="Yin H."/>
            <person name="Chu A."/>
            <person name="Li W."/>
            <person name="Wang B."/>
            <person name="Shelton F."/>
            <person name="Otero F."/>
            <person name="Nguyen D.G."/>
            <person name="Caldwell J.S."/>
            <person name="Chen Y.A."/>
        </authorList>
    </citation>
    <scope>LACK OF FUNCTION AS A SPHINGOSINE 1-PHOSPHATE RECEPTOR</scope>
</reference>